<evidence type="ECO:0000250" key="1">
    <source>
        <dbReference type="UniProtKB" id="P49171"/>
    </source>
</evidence>
<evidence type="ECO:0000250" key="2">
    <source>
        <dbReference type="UniProtKB" id="P62854"/>
    </source>
</evidence>
<evidence type="ECO:0000305" key="3"/>
<feature type="chain" id="PRO_0000204512" description="Small ribosomal subunit protein eS26">
    <location>
        <begin position="1"/>
        <end position="41" status="greater than"/>
    </location>
</feature>
<feature type="non-terminal residue">
    <location>
        <position position="41"/>
    </location>
</feature>
<protein>
    <recommendedName>
        <fullName evidence="3">Small ribosomal subunit protein eS26</fullName>
    </recommendedName>
    <alternativeName>
        <fullName>40S ribosomal protein S26</fullName>
    </alternativeName>
</protein>
<keyword id="KW-0963">Cytoplasm</keyword>
<keyword id="KW-0256">Endoplasmic reticulum</keyword>
<keyword id="KW-1185">Reference proteome</keyword>
<keyword id="KW-0687">Ribonucleoprotein</keyword>
<keyword id="KW-0689">Ribosomal protein</keyword>
<name>RS26_NEOVI</name>
<proteinExistence type="evidence at transcript level"/>
<organism>
    <name type="scientific">Neovison vison</name>
    <name type="common">American mink</name>
    <name type="synonym">Mustela vison</name>
    <dbReference type="NCBI Taxonomy" id="452646"/>
    <lineage>
        <taxon>Eukaryota</taxon>
        <taxon>Metazoa</taxon>
        <taxon>Chordata</taxon>
        <taxon>Craniata</taxon>
        <taxon>Vertebrata</taxon>
        <taxon>Euteleostomi</taxon>
        <taxon>Mammalia</taxon>
        <taxon>Eutheria</taxon>
        <taxon>Laurasiatheria</taxon>
        <taxon>Carnivora</taxon>
        <taxon>Caniformia</taxon>
        <taxon>Musteloidea</taxon>
        <taxon>Mustelidae</taxon>
        <taxon>Mustelinae</taxon>
        <taxon>Neogale</taxon>
    </lineage>
</organism>
<sequence>MTKKRRNNGRAKKGRGHVQPIRCTNLARCVPKDKAIKKFVS</sequence>
<gene>
    <name type="primary">RPS26</name>
</gene>
<accession>P41692</accession>
<reference key="1">
    <citation type="journal article" date="1995" name="Bioorg. Khim.">
        <title>The 5'-region of mink ribosomal protein S26 cDNA: sequencing and comparative analysis.</title>
        <authorList>
            <person name="Suturina I.U.A."/>
            <person name="Filipenko M.L."/>
            <person name="Muravlev A.I."/>
            <person name="Karpova G.G."/>
            <person name="Mertvetsov N.P."/>
        </authorList>
    </citation>
    <scope>NUCLEOTIDE SEQUENCE [MRNA]</scope>
    <source>
        <tissue>Spleen</tissue>
    </source>
</reference>
<comment type="function">
    <text evidence="2">Component of the small ribosomal subunit. The ribosome is a large ribonucleoprotein complex responsible for the synthesis of proteins in the cell.</text>
</comment>
<comment type="subunit">
    <text evidence="1">Component of the 40S small ribosomal subunit.</text>
</comment>
<comment type="subcellular location">
    <subcellularLocation>
        <location evidence="2">Cytoplasm</location>
        <location evidence="2">Cytosol</location>
    </subcellularLocation>
    <subcellularLocation>
        <location evidence="2">Cytoplasm</location>
    </subcellularLocation>
    <subcellularLocation>
        <location evidence="1">Rough endoplasmic reticulum</location>
    </subcellularLocation>
    <text evidence="1 2">Detected on cytosolic polysomes (By similarity). Detected in ribosomes that are associated with the rough endoplasmic reticulum (By similarity).</text>
</comment>
<comment type="similarity">
    <text evidence="3">Belongs to the eukaryotic ribosomal protein eS26 family.</text>
</comment>
<dbReference type="EMBL" id="X79237">
    <property type="protein sequence ID" value="CAA55819.1"/>
    <property type="molecule type" value="mRNA"/>
</dbReference>
<dbReference type="PIR" id="S45008">
    <property type="entry name" value="S45008"/>
</dbReference>
<dbReference type="SMR" id="P41692"/>
<dbReference type="Proteomes" id="UP000694425">
    <property type="component" value="Unplaced"/>
</dbReference>
<dbReference type="GO" id="GO:0098556">
    <property type="term" value="C:cytoplasmic side of rough endoplasmic reticulum membrane"/>
    <property type="evidence" value="ECO:0000250"/>
    <property type="project" value="UniProtKB"/>
</dbReference>
<dbReference type="GO" id="GO:0022627">
    <property type="term" value="C:cytosolic small ribosomal subunit"/>
    <property type="evidence" value="ECO:0000250"/>
    <property type="project" value="UniProtKB"/>
</dbReference>
<dbReference type="GO" id="GO:0005840">
    <property type="term" value="C:ribosome"/>
    <property type="evidence" value="ECO:0000250"/>
    <property type="project" value="UniProtKB"/>
</dbReference>
<dbReference type="GO" id="GO:0003729">
    <property type="term" value="F:mRNA binding"/>
    <property type="evidence" value="ECO:0007669"/>
    <property type="project" value="TreeGrafter"/>
</dbReference>
<dbReference type="GO" id="GO:0003735">
    <property type="term" value="F:structural constituent of ribosome"/>
    <property type="evidence" value="ECO:0007669"/>
    <property type="project" value="InterPro"/>
</dbReference>
<dbReference type="GO" id="GO:0002181">
    <property type="term" value="P:cytoplasmic translation"/>
    <property type="evidence" value="ECO:0000250"/>
    <property type="project" value="UniProtKB"/>
</dbReference>
<dbReference type="Gene3D" id="3.30.1740.20">
    <property type="entry name" value="Ribosomal protein S26e"/>
    <property type="match status" value="1"/>
</dbReference>
<dbReference type="InterPro" id="IPR000892">
    <property type="entry name" value="Ribosomal_eS26"/>
</dbReference>
<dbReference type="InterPro" id="IPR038551">
    <property type="entry name" value="Ribosomal_eS26_sf"/>
</dbReference>
<dbReference type="PANTHER" id="PTHR12538">
    <property type="entry name" value="40S RIBOSOMAL PROTEIN S26"/>
    <property type="match status" value="1"/>
</dbReference>
<dbReference type="PANTHER" id="PTHR12538:SF0">
    <property type="entry name" value="40S RIBOSOMAL PROTEIN S26"/>
    <property type="match status" value="1"/>
</dbReference>
<dbReference type="Pfam" id="PF01283">
    <property type="entry name" value="Ribosomal_S26e"/>
    <property type="match status" value="1"/>
</dbReference>